<dbReference type="EMBL" id="CP001197">
    <property type="protein sequence ID" value="ACL07042.1"/>
    <property type="molecule type" value="Genomic_DNA"/>
</dbReference>
<dbReference type="SMR" id="B8DN98"/>
<dbReference type="STRING" id="883.DvMF_0081"/>
<dbReference type="KEGG" id="dvm:DvMF_0081"/>
<dbReference type="eggNOG" id="COG0089">
    <property type="taxonomic scope" value="Bacteria"/>
</dbReference>
<dbReference type="HOGENOM" id="CLU_037562_3_1_7"/>
<dbReference type="OrthoDB" id="9793353at2"/>
<dbReference type="GO" id="GO:1990904">
    <property type="term" value="C:ribonucleoprotein complex"/>
    <property type="evidence" value="ECO:0007669"/>
    <property type="project" value="UniProtKB-KW"/>
</dbReference>
<dbReference type="GO" id="GO:0005840">
    <property type="term" value="C:ribosome"/>
    <property type="evidence" value="ECO:0007669"/>
    <property type="project" value="UniProtKB-KW"/>
</dbReference>
<dbReference type="GO" id="GO:0019843">
    <property type="term" value="F:rRNA binding"/>
    <property type="evidence" value="ECO:0007669"/>
    <property type="project" value="UniProtKB-UniRule"/>
</dbReference>
<dbReference type="GO" id="GO:0003735">
    <property type="term" value="F:structural constituent of ribosome"/>
    <property type="evidence" value="ECO:0007669"/>
    <property type="project" value="InterPro"/>
</dbReference>
<dbReference type="GO" id="GO:0006412">
    <property type="term" value="P:translation"/>
    <property type="evidence" value="ECO:0007669"/>
    <property type="project" value="UniProtKB-UniRule"/>
</dbReference>
<dbReference type="Gene3D" id="3.30.70.330">
    <property type="match status" value="1"/>
</dbReference>
<dbReference type="HAMAP" id="MF_01369_B">
    <property type="entry name" value="Ribosomal_uL23_B"/>
    <property type="match status" value="1"/>
</dbReference>
<dbReference type="InterPro" id="IPR012677">
    <property type="entry name" value="Nucleotide-bd_a/b_plait_sf"/>
</dbReference>
<dbReference type="InterPro" id="IPR013025">
    <property type="entry name" value="Ribosomal_uL23-like"/>
</dbReference>
<dbReference type="InterPro" id="IPR012678">
    <property type="entry name" value="Ribosomal_uL23/eL15/eS24_sf"/>
</dbReference>
<dbReference type="InterPro" id="IPR001014">
    <property type="entry name" value="Ribosomal_uL23_CS"/>
</dbReference>
<dbReference type="NCBIfam" id="NF004359">
    <property type="entry name" value="PRK05738.1-3"/>
    <property type="match status" value="1"/>
</dbReference>
<dbReference type="NCBIfam" id="NF004363">
    <property type="entry name" value="PRK05738.2-4"/>
    <property type="match status" value="1"/>
</dbReference>
<dbReference type="PANTHER" id="PTHR11620">
    <property type="entry name" value="60S RIBOSOMAL PROTEIN L23A"/>
    <property type="match status" value="1"/>
</dbReference>
<dbReference type="Pfam" id="PF00276">
    <property type="entry name" value="Ribosomal_L23"/>
    <property type="match status" value="1"/>
</dbReference>
<dbReference type="SUPFAM" id="SSF54189">
    <property type="entry name" value="Ribosomal proteins S24e, L23 and L15e"/>
    <property type="match status" value="1"/>
</dbReference>
<dbReference type="PROSITE" id="PS00050">
    <property type="entry name" value="RIBOSOMAL_L23"/>
    <property type="match status" value="1"/>
</dbReference>
<feature type="chain" id="PRO_1000144564" description="Large ribosomal subunit protein uL23">
    <location>
        <begin position="1"/>
        <end position="96"/>
    </location>
</feature>
<evidence type="ECO:0000255" key="1">
    <source>
        <dbReference type="HAMAP-Rule" id="MF_01369"/>
    </source>
</evidence>
<evidence type="ECO:0000305" key="2"/>
<accession>B8DN98</accession>
<organism>
    <name type="scientific">Nitratidesulfovibrio vulgaris (strain DSM 19637 / Miyazaki F)</name>
    <name type="common">Desulfovibrio vulgaris</name>
    <dbReference type="NCBI Taxonomy" id="883"/>
    <lineage>
        <taxon>Bacteria</taxon>
        <taxon>Pseudomonadati</taxon>
        <taxon>Thermodesulfobacteriota</taxon>
        <taxon>Desulfovibrionia</taxon>
        <taxon>Desulfovibrionales</taxon>
        <taxon>Desulfovibrionaceae</taxon>
        <taxon>Nitratidesulfovibrio</taxon>
    </lineage>
</organism>
<reference key="1">
    <citation type="submission" date="2008-10" db="EMBL/GenBank/DDBJ databases">
        <title>Complete sequence of Desulfovibrio vulgaris str. 'Miyazaki F'.</title>
        <authorList>
            <person name="Lucas S."/>
            <person name="Copeland A."/>
            <person name="Lapidus A."/>
            <person name="Glavina del Rio T."/>
            <person name="Dalin E."/>
            <person name="Tice H."/>
            <person name="Bruce D."/>
            <person name="Goodwin L."/>
            <person name="Pitluck S."/>
            <person name="Sims D."/>
            <person name="Brettin T."/>
            <person name="Detter J.C."/>
            <person name="Han C."/>
            <person name="Larimer F."/>
            <person name="Land M."/>
            <person name="Hauser L."/>
            <person name="Kyrpides N."/>
            <person name="Mikhailova N."/>
            <person name="Hazen T.C."/>
            <person name="Richardson P."/>
        </authorList>
    </citation>
    <scope>NUCLEOTIDE SEQUENCE [LARGE SCALE GENOMIC DNA]</scope>
    <source>
        <strain>DSM 19637 / Miyazaki F</strain>
    </source>
</reference>
<proteinExistence type="inferred from homology"/>
<keyword id="KW-0687">Ribonucleoprotein</keyword>
<keyword id="KW-0689">Ribosomal protein</keyword>
<keyword id="KW-0694">RNA-binding</keyword>
<keyword id="KW-0699">rRNA-binding</keyword>
<gene>
    <name evidence="1" type="primary">rplW</name>
    <name type="ordered locus">DvMF_0081</name>
</gene>
<protein>
    <recommendedName>
        <fullName evidence="1">Large ribosomal subunit protein uL23</fullName>
    </recommendedName>
    <alternativeName>
        <fullName evidence="2">50S ribosomal protein L23</fullName>
    </alternativeName>
</protein>
<comment type="function">
    <text evidence="1">One of the early assembly proteins it binds 23S rRNA. One of the proteins that surrounds the polypeptide exit tunnel on the outside of the ribosome. Forms the main docking site for trigger factor binding to the ribosome.</text>
</comment>
<comment type="subunit">
    <text evidence="1">Part of the 50S ribosomal subunit. Contacts protein L29, and trigger factor when it is bound to the ribosome.</text>
</comment>
<comment type="similarity">
    <text evidence="1">Belongs to the universal ribosomal protein uL23 family.</text>
</comment>
<name>RL23_NITV9</name>
<sequence length="96" mass="10727">MDYTQILVKPLVSEKATFVKEQAQQVVFFVNPRANKIEIKKAVEAAFKVKVTDVNVITKKPSDKVRQGRVVGRISGCKKAYVTLAPGEKIEFFEGV</sequence>